<comment type="function">
    <text evidence="1">Methionine-sulfoxide reductase that specifically reduces methionine (R)-sulfoxide back to methionine. While in many cases, methionine oxidation is the result of random oxidation following oxidative stress, methionine oxidation is also a post-translational modification that takes place on specific residue. Acts as a regulator of actin assembly by reducing methionine (R)-sulfoxide mediated by MICALs (MICAL1, MICAL2 or MICAL3) on actin, thereby promoting filament repolymerization. Plays a role in innate immunity by reducing oxidized actin, leading to actin repolymerization in macrophages.</text>
</comment>
<comment type="catalytic activity">
    <reaction evidence="1">
        <text>L-methionyl-[protein] + [thioredoxin]-disulfide + H2O = L-methionyl-(R)-S-oxide-[protein] + [thioredoxin]-dithiol</text>
        <dbReference type="Rhea" id="RHEA:24164"/>
        <dbReference type="Rhea" id="RHEA-COMP:10698"/>
        <dbReference type="Rhea" id="RHEA-COMP:10700"/>
        <dbReference type="Rhea" id="RHEA-COMP:12313"/>
        <dbReference type="Rhea" id="RHEA-COMP:12314"/>
        <dbReference type="ChEBI" id="CHEBI:15377"/>
        <dbReference type="ChEBI" id="CHEBI:16044"/>
        <dbReference type="ChEBI" id="CHEBI:29950"/>
        <dbReference type="ChEBI" id="CHEBI:45764"/>
        <dbReference type="ChEBI" id="CHEBI:50058"/>
        <dbReference type="EC" id="1.8.4.12"/>
    </reaction>
</comment>
<comment type="catalytic activity">
    <reaction evidence="1">
        <text>[thioredoxin]-disulfide + L-methionine + H2O = L-methionine (R)-S-oxide + [thioredoxin]-dithiol</text>
        <dbReference type="Rhea" id="RHEA:21260"/>
        <dbReference type="Rhea" id="RHEA-COMP:10698"/>
        <dbReference type="Rhea" id="RHEA-COMP:10700"/>
        <dbReference type="ChEBI" id="CHEBI:15377"/>
        <dbReference type="ChEBI" id="CHEBI:29950"/>
        <dbReference type="ChEBI" id="CHEBI:50058"/>
        <dbReference type="ChEBI" id="CHEBI:57844"/>
        <dbReference type="ChEBI" id="CHEBI:58773"/>
        <dbReference type="EC" id="1.8.4.14"/>
    </reaction>
</comment>
<comment type="cofactor">
    <cofactor evidence="4">
        <name>Zn(2+)</name>
        <dbReference type="ChEBI" id="CHEBI:29105"/>
    </cofactor>
    <text evidence="1">Binds 1 zinc ion per subunit.</text>
</comment>
<comment type="interaction">
    <interactant intactId="EBI-12330065">
        <id>Q9NZV6</id>
    </interactant>
    <interactant intactId="EBI-821758">
        <id>PRO_0000000092</id>
        <label>APP</label>
        <dbReference type="UniProtKB" id="P05067"/>
    </interactant>
    <organismsDiffer>false</organismsDiffer>
    <experiments>4</experiments>
</comment>
<comment type="interaction">
    <interactant intactId="EBI-12330065">
        <id>Q9NZV6</id>
    </interactant>
    <interactant intactId="EBI-10961636">
        <id>P10909-5</id>
        <label>CLU</label>
    </interactant>
    <organismsDiffer>false</organismsDiffer>
    <experiments>10</experiments>
</comment>
<comment type="interaction">
    <interactant intactId="EBI-12330065">
        <id>Q9NZV6</id>
    </interactant>
    <interactant intactId="EBI-3867333">
        <id>A8MQ03</id>
        <label>CYSRT1</label>
    </interactant>
    <organismsDiffer>false</organismsDiffer>
    <experiments>3</experiments>
</comment>
<comment type="interaction">
    <interactant intactId="EBI-12330065">
        <id>Q9NZV6</id>
    </interactant>
    <interactant intactId="EBI-347427">
        <id>Q13099</id>
        <label>IFT88</label>
    </interactant>
    <organismsDiffer>false</organismsDiffer>
    <experiments>3</experiments>
</comment>
<comment type="interaction">
    <interactant intactId="EBI-12330065">
        <id>Q9NZV6</id>
    </interactant>
    <interactant intactId="EBI-6509505">
        <id>Q0VD86</id>
        <label>INCA1</label>
    </interactant>
    <organismsDiffer>false</organismsDiffer>
    <experiments>3</experiments>
</comment>
<comment type="interaction">
    <interactant intactId="EBI-12330065">
        <id>Q9NZV6</id>
    </interactant>
    <interactant intactId="EBI-719493">
        <id>P14373</id>
        <label>TRIM27</label>
    </interactant>
    <organismsDiffer>false</organismsDiffer>
    <experiments>3</experiments>
</comment>
<comment type="subcellular location">
    <subcellularLocation>
        <location evidence="1">Cytoplasm</location>
    </subcellularLocation>
    <subcellularLocation>
        <location evidence="1">Nucleus</location>
    </subcellularLocation>
    <subcellularLocation>
        <location evidence="1">Cytoplasm</location>
        <location evidence="1">Cytoskeleton</location>
    </subcellularLocation>
</comment>
<comment type="PTM">
    <text evidence="3">Truncated MSRB1/SEPX1 proteins produced by failed UGA/Sec decoding are ubiquitinated by some Cul2-RING E3 ubiquitin-protein ligase complexes (containing either PRAME, PRAMF6, PRAMF9 or FEM1C as substrate-recognition component).</text>
</comment>
<comment type="similarity">
    <text evidence="5">Belongs to the MsrB Met sulfoxide reductase family.</text>
</comment>
<comment type="sequence caution" evidence="5">
    <conflict type="erroneous termination">
        <sequence resource="EMBL-CDS" id="AAF28948"/>
    </conflict>
    <text>Truncated C-terminus.</text>
</comment>
<gene>
    <name type="primary">MSRB1</name>
    <name type="synonym">SEPX1</name>
    <name type="ORF">HSPC270</name>
</gene>
<accession>Q9NZV6</accession>
<accession>Q96RX6</accession>
<accession>Q9BTV2</accession>
<accession>Q9P0B1</accession>
<evidence type="ECO:0000250" key="1">
    <source>
        <dbReference type="UniProtKB" id="Q9JLC3"/>
    </source>
</evidence>
<evidence type="ECO:0000255" key="2">
    <source>
        <dbReference type="PROSITE-ProRule" id="PRU01126"/>
    </source>
</evidence>
<evidence type="ECO:0000269" key="3">
    <source>
    </source>
</evidence>
<evidence type="ECO:0000269" key="4">
    <source ref="8"/>
</evidence>
<evidence type="ECO:0000305" key="5"/>
<evidence type="ECO:0000305" key="6">
    <source>
    </source>
</evidence>
<evidence type="ECO:0007829" key="7">
    <source>
        <dbReference type="PDB" id="3MAO"/>
    </source>
</evidence>
<sequence length="116" mass="12760">MSFCSFFGGEVFQNHFEPGVYVCAKCGYELFSSRSKYAHSSPWPAFTETIHADSVAKRPEHNRSEALKVSCGKCGNGLGHEFLNDGPKPGQSRFUIFSSSLKFVPKGKETSASQGH</sequence>
<protein>
    <recommendedName>
        <fullName>Methionine-R-sulfoxide reductase B1</fullName>
        <shortName>MsrB1</shortName>
        <ecNumber evidence="1">1.8.4.12</ecNumber>
        <ecNumber evidence="1">1.8.4.14</ecNumber>
    </recommendedName>
    <alternativeName>
        <fullName>Selenoprotein X</fullName>
        <shortName>SelX</shortName>
    </alternativeName>
</protein>
<name>MSRB1_HUMAN</name>
<reference key="1">
    <citation type="journal article" date="1999" name="J. Biol. Chem.">
        <title>Novel selenoproteins identified in silico and in vivo by using a conserved RNA structural motif.</title>
        <authorList>
            <person name="Lescure A."/>
            <person name="Gautheret D."/>
            <person name="Carbon P."/>
            <person name="Krol A."/>
        </authorList>
    </citation>
    <scope>NUCLEOTIDE SEQUENCE [MRNA]</scope>
</reference>
<reference key="2">
    <citation type="submission" date="1999-09" db="EMBL/GenBank/DDBJ databases">
        <title>The human methionine sulfoxide reductase mRNA codes for a selenoprotein.</title>
        <authorList>
            <person name="Chabot M."/>
            <person name="de Medicis E."/>
        </authorList>
    </citation>
    <scope>NUCLEOTIDE SEQUENCE [MRNA]</scope>
</reference>
<reference key="3">
    <citation type="journal article" date="2000" name="Genome Res.">
        <title>Cloning and functional analysis of cDNAs with open reading frames for 300 previously undefined genes expressed in CD34+ hematopoietic stem/progenitor cells.</title>
        <authorList>
            <person name="Zhang Q.-H."/>
            <person name="Ye M."/>
            <person name="Wu X.-Y."/>
            <person name="Ren S.-X."/>
            <person name="Zhao M."/>
            <person name="Zhao C.-J."/>
            <person name="Fu G."/>
            <person name="Shen Y."/>
            <person name="Fan H.-Y."/>
            <person name="Lu G."/>
            <person name="Zhong M."/>
            <person name="Xu X.-R."/>
            <person name="Han Z.-G."/>
            <person name="Zhang J.-W."/>
            <person name="Tao J."/>
            <person name="Huang Q.-H."/>
            <person name="Zhou J."/>
            <person name="Hu G.-X."/>
            <person name="Gu J."/>
            <person name="Chen S.-J."/>
            <person name="Chen Z."/>
        </authorList>
    </citation>
    <scope>NUCLEOTIDE SEQUENCE [LARGE SCALE MRNA]</scope>
    <source>
        <tissue>Umbilical cord blood</tissue>
    </source>
</reference>
<reference key="4">
    <citation type="journal article" date="2001" name="Hum. Mol. Genet.">
        <title>Sequence, structure and pathology of the fully annotated terminal 2 Mb of the short arm of human chromosome 16.</title>
        <authorList>
            <person name="Daniels R.J."/>
            <person name="Peden J.F."/>
            <person name="Lloyd C."/>
            <person name="Horsley S.W."/>
            <person name="Clark K."/>
            <person name="Tufarelli C."/>
            <person name="Kearney L."/>
            <person name="Buckle V.J."/>
            <person name="Doggett N.A."/>
            <person name="Flint J."/>
            <person name="Higgs D.R."/>
        </authorList>
    </citation>
    <scope>NUCLEOTIDE SEQUENCE [LARGE SCALE GENOMIC DNA]</scope>
</reference>
<reference key="5">
    <citation type="journal article" date="2004" name="Genome Res.">
        <title>The status, quality, and expansion of the NIH full-length cDNA project: the Mammalian Gene Collection (MGC).</title>
        <authorList>
            <consortium name="The MGC Project Team"/>
        </authorList>
    </citation>
    <scope>NUCLEOTIDE SEQUENCE [LARGE SCALE MRNA]</scope>
    <source>
        <tissue>Skin</tissue>
    </source>
</reference>
<reference key="6">
    <citation type="journal article" date="2004" name="Nature">
        <title>The sequence and analysis of duplication-rich human chromosome 16.</title>
        <authorList>
            <person name="Martin J."/>
            <person name="Han C."/>
            <person name="Gordon L.A."/>
            <person name="Terry A."/>
            <person name="Prabhakar S."/>
            <person name="She X."/>
            <person name="Xie G."/>
            <person name="Hellsten U."/>
            <person name="Chan Y.M."/>
            <person name="Altherr M."/>
            <person name="Couronne O."/>
            <person name="Aerts A."/>
            <person name="Bajorek E."/>
            <person name="Black S."/>
            <person name="Blumer H."/>
            <person name="Branscomb E."/>
            <person name="Brown N.C."/>
            <person name="Bruno W.J."/>
            <person name="Buckingham J.M."/>
            <person name="Callen D.F."/>
            <person name="Campbell C.S."/>
            <person name="Campbell M.L."/>
            <person name="Campbell E.W."/>
            <person name="Caoile C."/>
            <person name="Challacombe J.F."/>
            <person name="Chasteen L.A."/>
            <person name="Chertkov O."/>
            <person name="Chi H.C."/>
            <person name="Christensen M."/>
            <person name="Clark L.M."/>
            <person name="Cohn J.D."/>
            <person name="Denys M."/>
            <person name="Detter J.C."/>
            <person name="Dickson M."/>
            <person name="Dimitrijevic-Bussod M."/>
            <person name="Escobar J."/>
            <person name="Fawcett J.J."/>
            <person name="Flowers D."/>
            <person name="Fotopulos D."/>
            <person name="Glavina T."/>
            <person name="Gomez M."/>
            <person name="Gonzales E."/>
            <person name="Goodstein D."/>
            <person name="Goodwin L.A."/>
            <person name="Grady D.L."/>
            <person name="Grigoriev I."/>
            <person name="Groza M."/>
            <person name="Hammon N."/>
            <person name="Hawkins T."/>
            <person name="Haydu L."/>
            <person name="Hildebrand C.E."/>
            <person name="Huang W."/>
            <person name="Israni S."/>
            <person name="Jett J."/>
            <person name="Jewett P.B."/>
            <person name="Kadner K."/>
            <person name="Kimball H."/>
            <person name="Kobayashi A."/>
            <person name="Krawczyk M.-C."/>
            <person name="Leyba T."/>
            <person name="Longmire J.L."/>
            <person name="Lopez F."/>
            <person name="Lou Y."/>
            <person name="Lowry S."/>
            <person name="Ludeman T."/>
            <person name="Manohar C.F."/>
            <person name="Mark G.A."/>
            <person name="McMurray K.L."/>
            <person name="Meincke L.J."/>
            <person name="Morgan J."/>
            <person name="Moyzis R.K."/>
            <person name="Mundt M.O."/>
            <person name="Munk A.C."/>
            <person name="Nandkeshwar R.D."/>
            <person name="Pitluck S."/>
            <person name="Pollard M."/>
            <person name="Predki P."/>
            <person name="Parson-Quintana B."/>
            <person name="Ramirez L."/>
            <person name="Rash S."/>
            <person name="Retterer J."/>
            <person name="Ricke D.O."/>
            <person name="Robinson D.L."/>
            <person name="Rodriguez A."/>
            <person name="Salamov A."/>
            <person name="Saunders E.H."/>
            <person name="Scott D."/>
            <person name="Shough T."/>
            <person name="Stallings R.L."/>
            <person name="Stalvey M."/>
            <person name="Sutherland R.D."/>
            <person name="Tapia R."/>
            <person name="Tesmer J.G."/>
            <person name="Thayer N."/>
            <person name="Thompson L.S."/>
            <person name="Tice H."/>
            <person name="Torney D.C."/>
            <person name="Tran-Gyamfi M."/>
            <person name="Tsai M."/>
            <person name="Ulanovsky L.E."/>
            <person name="Ustaszewska A."/>
            <person name="Vo N."/>
            <person name="White P.S."/>
            <person name="Williams A.L."/>
            <person name="Wills P.L."/>
            <person name="Wu J.-R."/>
            <person name="Wu K."/>
            <person name="Yang J."/>
            <person name="DeJong P."/>
            <person name="Bruce D."/>
            <person name="Doggett N.A."/>
            <person name="Deaven L."/>
            <person name="Schmutz J."/>
            <person name="Grimwood J."/>
            <person name="Richardson P."/>
            <person name="Rokhsar D.S."/>
            <person name="Eichler E.E."/>
            <person name="Gilna P."/>
            <person name="Lucas S.M."/>
            <person name="Myers R.M."/>
            <person name="Rubin E.M."/>
            <person name="Pennacchio L.A."/>
        </authorList>
    </citation>
    <scope>NUCLEOTIDE SEQUENCE [LARGE SCALE GENOMIC DNA]</scope>
</reference>
<reference key="7">
    <citation type="journal article" date="2015" name="Science">
        <title>SELENOPROTEINS. CRL2 aids elimination of truncated selenoproteins produced by failed UGA/Sec decoding.</title>
        <authorList>
            <person name="Lin H.C."/>
            <person name="Ho S.C."/>
            <person name="Chen Y.Y."/>
            <person name="Khoo K.H."/>
            <person name="Hsu P.H."/>
            <person name="Yen H.C."/>
        </authorList>
    </citation>
    <scope>UBIQUITINATION</scope>
</reference>
<reference key="8">
    <citation type="submission" date="2010-04" db="PDB data bank">
        <title>Crystal structure of human methionine-r-sulfoxide reductase b1 (msrb1).</title>
        <authorList>
            <consortium name="Structural genomics consortium (SGC)"/>
        </authorList>
    </citation>
    <scope>X-RAY CRYSTALLOGRAPHY (1.42 ANGSTROMS) OF 10-112 IN COMPLEX WITH IRON</scope>
    <scope>COFACTOR</scope>
    <scope>ZINC-BINDING SITES</scope>
</reference>
<keyword id="KW-0002">3D-structure</keyword>
<keyword id="KW-0963">Cytoplasm</keyword>
<keyword id="KW-0206">Cytoskeleton</keyword>
<keyword id="KW-0391">Immunity</keyword>
<keyword id="KW-0399">Innate immunity</keyword>
<keyword id="KW-0479">Metal-binding</keyword>
<keyword id="KW-0539">Nucleus</keyword>
<keyword id="KW-0560">Oxidoreductase</keyword>
<keyword id="KW-1267">Proteomics identification</keyword>
<keyword id="KW-1185">Reference proteome</keyword>
<keyword id="KW-0712">Selenocysteine</keyword>
<keyword id="KW-0832">Ubl conjugation</keyword>
<keyword id="KW-0862">Zinc</keyword>
<dbReference type="EC" id="1.8.4.12" evidence="1"/>
<dbReference type="EC" id="1.8.4.14" evidence="1"/>
<dbReference type="EMBL" id="AF166124">
    <property type="protein sequence ID" value="AAF21429.1"/>
    <property type="molecule type" value="mRNA"/>
</dbReference>
<dbReference type="EMBL" id="AF187272">
    <property type="protein sequence ID" value="AAG17033.1"/>
    <property type="molecule type" value="mRNA"/>
</dbReference>
<dbReference type="EMBL" id="AF161388">
    <property type="protein sequence ID" value="AAF28948.1"/>
    <property type="status" value="ALT_SEQ"/>
    <property type="molecule type" value="mRNA"/>
</dbReference>
<dbReference type="EMBL" id="AE006640">
    <property type="protein sequence ID" value="AAK61300.1"/>
    <property type="molecule type" value="Genomic_DNA"/>
</dbReference>
<dbReference type="EMBL" id="AC005363">
    <property type="status" value="NOT_ANNOTATED_CDS"/>
    <property type="molecule type" value="Genomic_DNA"/>
</dbReference>
<dbReference type="EMBL" id="BC003127">
    <property type="protein sequence ID" value="AAH03127.2"/>
    <property type="molecule type" value="mRNA"/>
</dbReference>
<dbReference type="CCDS" id="CCDS42100.1"/>
<dbReference type="RefSeq" id="NP_057416.1">
    <property type="nucleotide sequence ID" value="NM_016332.4"/>
</dbReference>
<dbReference type="PDB" id="3MAO">
    <property type="method" value="X-ray"/>
    <property type="resolution" value="1.42 A"/>
    <property type="chains" value="A=10-112"/>
</dbReference>
<dbReference type="PDBsum" id="3MAO"/>
<dbReference type="SMR" id="Q9NZV6"/>
<dbReference type="BioGRID" id="119704">
    <property type="interactions" value="11"/>
</dbReference>
<dbReference type="FunCoup" id="Q9NZV6">
    <property type="interactions" value="82"/>
</dbReference>
<dbReference type="IntAct" id="Q9NZV6">
    <property type="interactions" value="11"/>
</dbReference>
<dbReference type="MINT" id="Q9NZV6"/>
<dbReference type="STRING" id="9606.ENSP00000355084"/>
<dbReference type="DrugBank" id="DB00134">
    <property type="generic name" value="Methionine"/>
</dbReference>
<dbReference type="iPTMnet" id="Q9NZV6"/>
<dbReference type="PhosphoSitePlus" id="Q9NZV6"/>
<dbReference type="BioMuta" id="MSRB1"/>
<dbReference type="DMDM" id="182676387"/>
<dbReference type="jPOST" id="Q9NZV6"/>
<dbReference type="MassIVE" id="Q9NZV6"/>
<dbReference type="PaxDb" id="9606-ENSP00000355084"/>
<dbReference type="PeptideAtlas" id="Q9NZV6"/>
<dbReference type="ProteomicsDB" id="83519"/>
<dbReference type="Pumba" id="Q9NZV6"/>
<dbReference type="Antibodypedia" id="58024">
    <property type="antibodies" value="130 antibodies from 24 providers"/>
</dbReference>
<dbReference type="DNASU" id="51734"/>
<dbReference type="Ensembl" id="ENST00000361871.8">
    <property type="protein sequence ID" value="ENSP00000355084.3"/>
    <property type="gene ID" value="ENSG00000198736.13"/>
</dbReference>
<dbReference type="Ensembl" id="ENST00000709225.1">
    <property type="protein sequence ID" value="ENSP00000517565.1"/>
    <property type="gene ID" value="ENSG00000291928.1"/>
</dbReference>
<dbReference type="GeneID" id="51734"/>
<dbReference type="KEGG" id="hsa:51734"/>
<dbReference type="MANE-Select" id="ENST00000361871.8">
    <property type="protein sequence ID" value="ENSP00000355084.3"/>
    <property type="RefSeq nucleotide sequence ID" value="NM_016332.4"/>
    <property type="RefSeq protein sequence ID" value="NP_057416.1"/>
</dbReference>
<dbReference type="UCSC" id="uc021tam.2">
    <property type="organism name" value="human"/>
</dbReference>
<dbReference type="AGR" id="HGNC:14133"/>
<dbReference type="CTD" id="51734"/>
<dbReference type="DisGeNET" id="51734"/>
<dbReference type="GeneCards" id="MSRB1"/>
<dbReference type="HGNC" id="HGNC:14133">
    <property type="gene designation" value="MSRB1"/>
</dbReference>
<dbReference type="HPA" id="ENSG00000198736">
    <property type="expression patterns" value="Tissue enhanced (liver)"/>
</dbReference>
<dbReference type="MIM" id="606216">
    <property type="type" value="gene"/>
</dbReference>
<dbReference type="neXtProt" id="NX_Q9NZV6"/>
<dbReference type="OpenTargets" id="ENSG00000198736"/>
<dbReference type="PharmGKB" id="PA37848"/>
<dbReference type="VEuPathDB" id="HostDB:ENSG00000198736"/>
<dbReference type="eggNOG" id="KOG0856">
    <property type="taxonomic scope" value="Eukaryota"/>
</dbReference>
<dbReference type="GeneTree" id="ENSGT00510000047678"/>
<dbReference type="HOGENOM" id="CLU_147472_1_0_1"/>
<dbReference type="InParanoid" id="Q9NZV6"/>
<dbReference type="OMA" id="CSKCEHQ"/>
<dbReference type="OrthoDB" id="44061at2759"/>
<dbReference type="PAN-GO" id="Q9NZV6">
    <property type="GO annotations" value="4 GO annotations based on evolutionary models"/>
</dbReference>
<dbReference type="PhylomeDB" id="Q9NZV6"/>
<dbReference type="TreeFam" id="TF329147"/>
<dbReference type="BRENDA" id="1.8.4.12">
    <property type="organism ID" value="2681"/>
</dbReference>
<dbReference type="PathwayCommons" id="Q9NZV6"/>
<dbReference type="Reactome" id="R-HSA-5676934">
    <property type="pathway name" value="Protein repair"/>
</dbReference>
<dbReference type="SignaLink" id="Q9NZV6"/>
<dbReference type="BioGRID-ORCS" id="51734">
    <property type="hits" value="89 hits in 1158 CRISPR screens"/>
</dbReference>
<dbReference type="ChiTaRS" id="MSRB1">
    <property type="organism name" value="human"/>
</dbReference>
<dbReference type="EvolutionaryTrace" id="Q9NZV6"/>
<dbReference type="GeneWiki" id="SEPX1"/>
<dbReference type="GenomeRNAi" id="51734"/>
<dbReference type="Pharos" id="Q9NZV6">
    <property type="development level" value="Tbio"/>
</dbReference>
<dbReference type="PRO" id="PR:Q9NZV6"/>
<dbReference type="Proteomes" id="UP000005640">
    <property type="component" value="Chromosome 16"/>
</dbReference>
<dbReference type="RNAct" id="Q9NZV6">
    <property type="molecule type" value="protein"/>
</dbReference>
<dbReference type="Bgee" id="ENSG00000198736">
    <property type="expression patterns" value="Expressed in blood and 193 other cell types or tissues"/>
</dbReference>
<dbReference type="ExpressionAtlas" id="Q9NZV6">
    <property type="expression patterns" value="baseline and differential"/>
</dbReference>
<dbReference type="GO" id="GO:0015629">
    <property type="term" value="C:actin cytoskeleton"/>
    <property type="evidence" value="ECO:0007669"/>
    <property type="project" value="Ensembl"/>
</dbReference>
<dbReference type="GO" id="GO:0005829">
    <property type="term" value="C:cytosol"/>
    <property type="evidence" value="ECO:0000304"/>
    <property type="project" value="Reactome"/>
</dbReference>
<dbReference type="GO" id="GO:0005634">
    <property type="term" value="C:nucleus"/>
    <property type="evidence" value="ECO:0000318"/>
    <property type="project" value="GO_Central"/>
</dbReference>
<dbReference type="GO" id="GO:0003779">
    <property type="term" value="F:actin binding"/>
    <property type="evidence" value="ECO:0000250"/>
    <property type="project" value="UniProtKB"/>
</dbReference>
<dbReference type="GO" id="GO:0033745">
    <property type="term" value="F:L-methionine-(R)-S-oxide reductase activity"/>
    <property type="evidence" value="ECO:0007669"/>
    <property type="project" value="UniProtKB-EC"/>
</dbReference>
<dbReference type="GO" id="GO:0033743">
    <property type="term" value="F:peptide-methionine (R)-S-oxide reductase activity"/>
    <property type="evidence" value="ECO:0000250"/>
    <property type="project" value="UniProtKB"/>
</dbReference>
<dbReference type="GO" id="GO:0008270">
    <property type="term" value="F:zinc ion binding"/>
    <property type="evidence" value="ECO:0000250"/>
    <property type="project" value="HGNC-UCL"/>
</dbReference>
<dbReference type="GO" id="GO:0030041">
    <property type="term" value="P:actin filament polymerization"/>
    <property type="evidence" value="ECO:0000250"/>
    <property type="project" value="UniProtKB"/>
</dbReference>
<dbReference type="GO" id="GO:0045087">
    <property type="term" value="P:innate immune response"/>
    <property type="evidence" value="ECO:0000250"/>
    <property type="project" value="UniProtKB"/>
</dbReference>
<dbReference type="GO" id="GO:0030091">
    <property type="term" value="P:protein repair"/>
    <property type="evidence" value="ECO:0000250"/>
    <property type="project" value="HGNC-UCL"/>
</dbReference>
<dbReference type="FunFam" id="2.170.150.20:FF:000008">
    <property type="entry name" value="methionine-R-sulfoxide reductase B1"/>
    <property type="match status" value="1"/>
</dbReference>
<dbReference type="Gene3D" id="2.170.150.20">
    <property type="entry name" value="Peptide methionine sulfoxide reductase"/>
    <property type="match status" value="1"/>
</dbReference>
<dbReference type="InterPro" id="IPR002579">
    <property type="entry name" value="Met_Sox_Rdtase_MsrB_dom"/>
</dbReference>
<dbReference type="InterPro" id="IPR052150">
    <property type="entry name" value="MsrB_Met_sulfoxide_reductase"/>
</dbReference>
<dbReference type="InterPro" id="IPR011057">
    <property type="entry name" value="Mss4-like_sf"/>
</dbReference>
<dbReference type="PANTHER" id="PTHR46755">
    <property type="entry name" value="METHIONINE-R-SULFOXIDE REDUCTASE B1"/>
    <property type="match status" value="1"/>
</dbReference>
<dbReference type="PANTHER" id="PTHR46755:SF5">
    <property type="entry name" value="METHIONINE-R-SULFOXIDE REDUCTASE B1"/>
    <property type="match status" value="1"/>
</dbReference>
<dbReference type="Pfam" id="PF01641">
    <property type="entry name" value="SelR"/>
    <property type="match status" value="1"/>
</dbReference>
<dbReference type="SUPFAM" id="SSF51316">
    <property type="entry name" value="Mss4-like"/>
    <property type="match status" value="1"/>
</dbReference>
<dbReference type="PROSITE" id="PS51790">
    <property type="entry name" value="MSRB"/>
    <property type="match status" value="1"/>
</dbReference>
<proteinExistence type="evidence at protein level"/>
<feature type="chain" id="PRO_0000140321" description="Methionine-R-sulfoxide reductase B1">
    <location>
        <begin position="1"/>
        <end position="116"/>
    </location>
</feature>
<feature type="domain" description="MsrB" evidence="2">
    <location>
        <begin position="1"/>
        <end position="106"/>
    </location>
</feature>
<feature type="active site" description="Nucleophile" evidence="2">
    <location>
        <position position="95"/>
    </location>
</feature>
<feature type="binding site" evidence="2 4">
    <location>
        <position position="23"/>
    </location>
    <ligand>
        <name>Zn(2+)</name>
        <dbReference type="ChEBI" id="CHEBI:29105"/>
    </ligand>
</feature>
<feature type="binding site" evidence="2 4">
    <location>
        <position position="26"/>
    </location>
    <ligand>
        <name>Zn(2+)</name>
        <dbReference type="ChEBI" id="CHEBI:29105"/>
    </ligand>
</feature>
<feature type="binding site" evidence="2 4">
    <location>
        <position position="71"/>
    </location>
    <ligand>
        <name>Zn(2+)</name>
        <dbReference type="ChEBI" id="CHEBI:29105"/>
    </ligand>
</feature>
<feature type="binding site" evidence="2 4">
    <location>
        <position position="74"/>
    </location>
    <ligand>
        <name>Zn(2+)</name>
        <dbReference type="ChEBI" id="CHEBI:29105"/>
    </ligand>
</feature>
<feature type="non-standard amino acid" description="Selenocysteine" evidence="6">
    <location>
        <position position="95"/>
    </location>
</feature>
<feature type="strand" evidence="7">
    <location>
        <begin position="18"/>
        <end position="23"/>
    </location>
</feature>
<feature type="turn" evidence="7">
    <location>
        <begin position="24"/>
        <end position="26"/>
    </location>
</feature>
<feature type="strand" evidence="7">
    <location>
        <begin position="29"/>
        <end position="32"/>
    </location>
</feature>
<feature type="helix" evidence="7">
    <location>
        <begin position="33"/>
        <end position="35"/>
    </location>
</feature>
<feature type="strand" evidence="7">
    <location>
        <begin position="40"/>
        <end position="43"/>
    </location>
</feature>
<feature type="strand" evidence="7">
    <location>
        <begin position="45"/>
        <end position="47"/>
    </location>
</feature>
<feature type="strand" evidence="7">
    <location>
        <begin position="54"/>
        <end position="59"/>
    </location>
</feature>
<feature type="strand" evidence="7">
    <location>
        <begin position="66"/>
        <end position="71"/>
    </location>
</feature>
<feature type="turn" evidence="7">
    <location>
        <begin position="72"/>
        <end position="74"/>
    </location>
</feature>
<feature type="strand" evidence="7">
    <location>
        <begin position="77"/>
        <end position="82"/>
    </location>
</feature>
<feature type="strand" evidence="7">
    <location>
        <begin position="86"/>
        <end position="88"/>
    </location>
</feature>
<feature type="strand" evidence="7">
    <location>
        <begin position="93"/>
        <end position="96"/>
    </location>
</feature>
<feature type="helix" evidence="7">
    <location>
        <begin position="98"/>
        <end position="100"/>
    </location>
</feature>
<feature type="strand" evidence="7">
    <location>
        <begin position="101"/>
        <end position="105"/>
    </location>
</feature>
<organism>
    <name type="scientific">Homo sapiens</name>
    <name type="common">Human</name>
    <dbReference type="NCBI Taxonomy" id="9606"/>
    <lineage>
        <taxon>Eukaryota</taxon>
        <taxon>Metazoa</taxon>
        <taxon>Chordata</taxon>
        <taxon>Craniata</taxon>
        <taxon>Vertebrata</taxon>
        <taxon>Euteleostomi</taxon>
        <taxon>Mammalia</taxon>
        <taxon>Eutheria</taxon>
        <taxon>Euarchontoglires</taxon>
        <taxon>Primates</taxon>
        <taxon>Haplorrhini</taxon>
        <taxon>Catarrhini</taxon>
        <taxon>Hominidae</taxon>
        <taxon>Homo</taxon>
    </lineage>
</organism>